<evidence type="ECO:0000255" key="1">
    <source>
        <dbReference type="HAMAP-Rule" id="MF_00303"/>
    </source>
</evidence>
<sequence length="433" mass="48959">MQVSVETTQGLERRVTVTVPADTIDSEVKRLLKEEYRHRRVNGFRKGKIPPNVLQKLFGREARSRAASSIMQSKYFEAVMQEKLNPAGAPAIEPKVNEPGKDLEFTATFEVYPEVEVQNLDKVKVEKPAVEVTEKDVDNMLETLQKQHADWKEVKRKSKKGDRVTMDFVGSIDGEEFEGGKADDFALELGEGRMIPGFEDQIKGIKAGEEKTIEVTFPEDYHAENLKGKEAQFVVTAKKVEARDLPELNDEFVALFGVKEGGVEALKEEVRKNMERELKNAVKAKVKEQVLKGIVENNDVELPKSMIDQEIDQLRKQAAQRFGGNVEQMPDLPAELFEEQAKERVKVGLLLGEVIRGNELKADDEKVDEIIATAASAYEDPQEVVEYYKSNNDMMQQVRNLALEEQAIEFVLEKASVKDKKASFDDIMNPKQQ</sequence>
<organism>
    <name type="scientific">Idiomarina loihiensis (strain ATCC BAA-735 / DSM 15497 / L2-TR)</name>
    <dbReference type="NCBI Taxonomy" id="283942"/>
    <lineage>
        <taxon>Bacteria</taxon>
        <taxon>Pseudomonadati</taxon>
        <taxon>Pseudomonadota</taxon>
        <taxon>Gammaproteobacteria</taxon>
        <taxon>Alteromonadales</taxon>
        <taxon>Idiomarinaceae</taxon>
        <taxon>Idiomarina</taxon>
    </lineage>
</organism>
<reference key="1">
    <citation type="journal article" date="2004" name="Proc. Natl. Acad. Sci. U.S.A.">
        <title>Genome sequence of the deep-sea gamma-proteobacterium Idiomarina loihiensis reveals amino acid fermentation as a source of carbon and energy.</title>
        <authorList>
            <person name="Hou S."/>
            <person name="Saw J.H."/>
            <person name="Lee K.S."/>
            <person name="Freitas T.A."/>
            <person name="Belisle C."/>
            <person name="Kawarabayasi Y."/>
            <person name="Donachie S.P."/>
            <person name="Pikina A."/>
            <person name="Galperin M.Y."/>
            <person name="Koonin E.V."/>
            <person name="Makarova K.S."/>
            <person name="Omelchenko M.V."/>
            <person name="Sorokin A."/>
            <person name="Wolf Y.I."/>
            <person name="Li Q.X."/>
            <person name="Keum Y.S."/>
            <person name="Campbell S."/>
            <person name="Denery J."/>
            <person name="Aizawa S."/>
            <person name="Shibata S."/>
            <person name="Malahoff A."/>
            <person name="Alam M."/>
        </authorList>
    </citation>
    <scope>NUCLEOTIDE SEQUENCE [LARGE SCALE GENOMIC DNA]</scope>
    <source>
        <strain>ATCC BAA-735 / DSM 15497 / L2-TR</strain>
    </source>
</reference>
<protein>
    <recommendedName>
        <fullName evidence="1">Trigger factor</fullName>
        <shortName evidence="1">TF</shortName>
        <ecNumber evidence="1">5.2.1.8</ecNumber>
    </recommendedName>
    <alternativeName>
        <fullName evidence="1">PPIase</fullName>
    </alternativeName>
</protein>
<gene>
    <name evidence="1" type="primary">tig</name>
    <name type="ordered locus">IL1006</name>
</gene>
<dbReference type="EC" id="5.2.1.8" evidence="1"/>
<dbReference type="EMBL" id="AE017340">
    <property type="protein sequence ID" value="AAV81846.1"/>
    <property type="molecule type" value="Genomic_DNA"/>
</dbReference>
<dbReference type="RefSeq" id="WP_011234257.1">
    <property type="nucleotide sequence ID" value="NC_006512.1"/>
</dbReference>
<dbReference type="SMR" id="Q5QXN7"/>
<dbReference type="STRING" id="283942.IL1006"/>
<dbReference type="GeneID" id="41336168"/>
<dbReference type="KEGG" id="ilo:IL1006"/>
<dbReference type="eggNOG" id="COG0544">
    <property type="taxonomic scope" value="Bacteria"/>
</dbReference>
<dbReference type="HOGENOM" id="CLU_033058_2_0_6"/>
<dbReference type="OrthoDB" id="9767721at2"/>
<dbReference type="Proteomes" id="UP000001171">
    <property type="component" value="Chromosome"/>
</dbReference>
<dbReference type="GO" id="GO:0005737">
    <property type="term" value="C:cytoplasm"/>
    <property type="evidence" value="ECO:0007669"/>
    <property type="project" value="UniProtKB-SubCell"/>
</dbReference>
<dbReference type="GO" id="GO:0003755">
    <property type="term" value="F:peptidyl-prolyl cis-trans isomerase activity"/>
    <property type="evidence" value="ECO:0007669"/>
    <property type="project" value="UniProtKB-UniRule"/>
</dbReference>
<dbReference type="GO" id="GO:0044183">
    <property type="term" value="F:protein folding chaperone"/>
    <property type="evidence" value="ECO:0007669"/>
    <property type="project" value="TreeGrafter"/>
</dbReference>
<dbReference type="GO" id="GO:0043022">
    <property type="term" value="F:ribosome binding"/>
    <property type="evidence" value="ECO:0007669"/>
    <property type="project" value="TreeGrafter"/>
</dbReference>
<dbReference type="GO" id="GO:0051083">
    <property type="term" value="P:'de novo' cotranslational protein folding"/>
    <property type="evidence" value="ECO:0007669"/>
    <property type="project" value="TreeGrafter"/>
</dbReference>
<dbReference type="GO" id="GO:0051301">
    <property type="term" value="P:cell division"/>
    <property type="evidence" value="ECO:0007669"/>
    <property type="project" value="UniProtKB-KW"/>
</dbReference>
<dbReference type="GO" id="GO:0061077">
    <property type="term" value="P:chaperone-mediated protein folding"/>
    <property type="evidence" value="ECO:0007669"/>
    <property type="project" value="TreeGrafter"/>
</dbReference>
<dbReference type="GO" id="GO:0015031">
    <property type="term" value="P:protein transport"/>
    <property type="evidence" value="ECO:0007669"/>
    <property type="project" value="UniProtKB-UniRule"/>
</dbReference>
<dbReference type="GO" id="GO:0043335">
    <property type="term" value="P:protein unfolding"/>
    <property type="evidence" value="ECO:0007669"/>
    <property type="project" value="TreeGrafter"/>
</dbReference>
<dbReference type="FunFam" id="3.10.50.40:FF:000001">
    <property type="entry name" value="Trigger factor"/>
    <property type="match status" value="1"/>
</dbReference>
<dbReference type="Gene3D" id="3.10.50.40">
    <property type="match status" value="1"/>
</dbReference>
<dbReference type="Gene3D" id="3.30.70.1050">
    <property type="entry name" value="Trigger factor ribosome-binding domain"/>
    <property type="match status" value="1"/>
</dbReference>
<dbReference type="Gene3D" id="1.10.3120.10">
    <property type="entry name" value="Trigger factor, C-terminal domain"/>
    <property type="match status" value="1"/>
</dbReference>
<dbReference type="HAMAP" id="MF_00303">
    <property type="entry name" value="Trigger_factor_Tig"/>
    <property type="match status" value="1"/>
</dbReference>
<dbReference type="InterPro" id="IPR046357">
    <property type="entry name" value="PPIase_dom_sf"/>
</dbReference>
<dbReference type="InterPro" id="IPR001179">
    <property type="entry name" value="PPIase_FKBP_dom"/>
</dbReference>
<dbReference type="InterPro" id="IPR005215">
    <property type="entry name" value="Trig_fac"/>
</dbReference>
<dbReference type="InterPro" id="IPR008880">
    <property type="entry name" value="Trigger_fac_C"/>
</dbReference>
<dbReference type="InterPro" id="IPR037041">
    <property type="entry name" value="Trigger_fac_C_sf"/>
</dbReference>
<dbReference type="InterPro" id="IPR008881">
    <property type="entry name" value="Trigger_fac_ribosome-bd_bac"/>
</dbReference>
<dbReference type="InterPro" id="IPR036611">
    <property type="entry name" value="Trigger_fac_ribosome-bd_sf"/>
</dbReference>
<dbReference type="InterPro" id="IPR027304">
    <property type="entry name" value="Trigger_fact/SurA_dom_sf"/>
</dbReference>
<dbReference type="NCBIfam" id="TIGR00115">
    <property type="entry name" value="tig"/>
    <property type="match status" value="1"/>
</dbReference>
<dbReference type="PANTHER" id="PTHR30560">
    <property type="entry name" value="TRIGGER FACTOR CHAPERONE AND PEPTIDYL-PROLYL CIS/TRANS ISOMERASE"/>
    <property type="match status" value="1"/>
</dbReference>
<dbReference type="PANTHER" id="PTHR30560:SF3">
    <property type="entry name" value="TRIGGER FACTOR-LIKE PROTEIN TIG, CHLOROPLASTIC"/>
    <property type="match status" value="1"/>
</dbReference>
<dbReference type="Pfam" id="PF00254">
    <property type="entry name" value="FKBP_C"/>
    <property type="match status" value="1"/>
</dbReference>
<dbReference type="Pfam" id="PF05698">
    <property type="entry name" value="Trigger_C"/>
    <property type="match status" value="1"/>
</dbReference>
<dbReference type="Pfam" id="PF05697">
    <property type="entry name" value="Trigger_N"/>
    <property type="match status" value="1"/>
</dbReference>
<dbReference type="PIRSF" id="PIRSF003095">
    <property type="entry name" value="Trigger_factor"/>
    <property type="match status" value="1"/>
</dbReference>
<dbReference type="SUPFAM" id="SSF54534">
    <property type="entry name" value="FKBP-like"/>
    <property type="match status" value="1"/>
</dbReference>
<dbReference type="SUPFAM" id="SSF109998">
    <property type="entry name" value="Triger factor/SurA peptide-binding domain-like"/>
    <property type="match status" value="1"/>
</dbReference>
<dbReference type="SUPFAM" id="SSF102735">
    <property type="entry name" value="Trigger factor ribosome-binding domain"/>
    <property type="match status" value="1"/>
</dbReference>
<dbReference type="PROSITE" id="PS50059">
    <property type="entry name" value="FKBP_PPIASE"/>
    <property type="match status" value="1"/>
</dbReference>
<comment type="function">
    <text evidence="1">Involved in protein export. Acts as a chaperone by maintaining the newly synthesized protein in an open conformation. Functions as a peptidyl-prolyl cis-trans isomerase.</text>
</comment>
<comment type="catalytic activity">
    <reaction evidence="1">
        <text>[protein]-peptidylproline (omega=180) = [protein]-peptidylproline (omega=0)</text>
        <dbReference type="Rhea" id="RHEA:16237"/>
        <dbReference type="Rhea" id="RHEA-COMP:10747"/>
        <dbReference type="Rhea" id="RHEA-COMP:10748"/>
        <dbReference type="ChEBI" id="CHEBI:83833"/>
        <dbReference type="ChEBI" id="CHEBI:83834"/>
        <dbReference type="EC" id="5.2.1.8"/>
    </reaction>
</comment>
<comment type="subcellular location">
    <subcellularLocation>
        <location>Cytoplasm</location>
    </subcellularLocation>
    <text evidence="1">About half TF is bound to the ribosome near the polypeptide exit tunnel while the other half is free in the cytoplasm.</text>
</comment>
<comment type="domain">
    <text evidence="1">Consists of 3 domains; the N-terminus binds the ribosome, the middle domain has PPIase activity, while the C-terminus has intrinsic chaperone activity on its own.</text>
</comment>
<comment type="similarity">
    <text evidence="1">Belongs to the FKBP-type PPIase family. Tig subfamily.</text>
</comment>
<name>TIG_IDILO</name>
<keyword id="KW-0131">Cell cycle</keyword>
<keyword id="KW-0132">Cell division</keyword>
<keyword id="KW-0143">Chaperone</keyword>
<keyword id="KW-0963">Cytoplasm</keyword>
<keyword id="KW-0413">Isomerase</keyword>
<keyword id="KW-1185">Reference proteome</keyword>
<keyword id="KW-0697">Rotamase</keyword>
<proteinExistence type="inferred from homology"/>
<feature type="chain" id="PRO_0000179365" description="Trigger factor">
    <location>
        <begin position="1"/>
        <end position="433"/>
    </location>
</feature>
<feature type="domain" description="PPIase FKBP-type" evidence="1">
    <location>
        <begin position="161"/>
        <end position="246"/>
    </location>
</feature>
<accession>Q5QXN7</accession>